<comment type="similarity">
    <text evidence="1">Belongs to the bacterial ribosomal protein bS16 family.</text>
</comment>
<proteinExistence type="inferred from homology"/>
<feature type="chain" id="PRO_1000080152" description="Small ribosomal subunit protein bS16">
    <location>
        <begin position="1"/>
        <end position="82"/>
    </location>
</feature>
<name>RS16_FRATF</name>
<accession>A7NEB3</accession>
<protein>
    <recommendedName>
        <fullName evidence="1">Small ribosomal subunit protein bS16</fullName>
    </recommendedName>
    <alternativeName>
        <fullName evidence="2">30S ribosomal protein S16</fullName>
    </alternativeName>
</protein>
<keyword id="KW-0687">Ribonucleoprotein</keyword>
<keyword id="KW-0689">Ribosomal protein</keyword>
<evidence type="ECO:0000255" key="1">
    <source>
        <dbReference type="HAMAP-Rule" id="MF_00385"/>
    </source>
</evidence>
<evidence type="ECO:0000305" key="2"/>
<gene>
    <name evidence="1" type="primary">rpsP</name>
    <name type="ordered locus">FTA_1841</name>
</gene>
<dbReference type="EMBL" id="CP000803">
    <property type="protein sequence ID" value="ABU62316.2"/>
    <property type="molecule type" value="Genomic_DNA"/>
</dbReference>
<dbReference type="RefSeq" id="WP_003017217.1">
    <property type="nucleotide sequence ID" value="NC_009749.1"/>
</dbReference>
<dbReference type="SMR" id="A7NEB3"/>
<dbReference type="KEGG" id="fta:FTA_1841"/>
<dbReference type="HOGENOM" id="CLU_100590_5_1_6"/>
<dbReference type="GO" id="GO:0005737">
    <property type="term" value="C:cytoplasm"/>
    <property type="evidence" value="ECO:0007669"/>
    <property type="project" value="UniProtKB-ARBA"/>
</dbReference>
<dbReference type="GO" id="GO:0015935">
    <property type="term" value="C:small ribosomal subunit"/>
    <property type="evidence" value="ECO:0007669"/>
    <property type="project" value="TreeGrafter"/>
</dbReference>
<dbReference type="GO" id="GO:0003735">
    <property type="term" value="F:structural constituent of ribosome"/>
    <property type="evidence" value="ECO:0007669"/>
    <property type="project" value="InterPro"/>
</dbReference>
<dbReference type="GO" id="GO:0006412">
    <property type="term" value="P:translation"/>
    <property type="evidence" value="ECO:0007669"/>
    <property type="project" value="UniProtKB-UniRule"/>
</dbReference>
<dbReference type="Gene3D" id="3.30.1320.10">
    <property type="match status" value="1"/>
</dbReference>
<dbReference type="HAMAP" id="MF_00385">
    <property type="entry name" value="Ribosomal_bS16"/>
    <property type="match status" value="1"/>
</dbReference>
<dbReference type="InterPro" id="IPR000307">
    <property type="entry name" value="Ribosomal_bS16"/>
</dbReference>
<dbReference type="InterPro" id="IPR023803">
    <property type="entry name" value="Ribosomal_bS16_dom_sf"/>
</dbReference>
<dbReference type="NCBIfam" id="TIGR00002">
    <property type="entry name" value="S16"/>
    <property type="match status" value="1"/>
</dbReference>
<dbReference type="PANTHER" id="PTHR12919">
    <property type="entry name" value="30S RIBOSOMAL PROTEIN S16"/>
    <property type="match status" value="1"/>
</dbReference>
<dbReference type="PANTHER" id="PTHR12919:SF20">
    <property type="entry name" value="SMALL RIBOSOMAL SUBUNIT PROTEIN BS16M"/>
    <property type="match status" value="1"/>
</dbReference>
<dbReference type="Pfam" id="PF00886">
    <property type="entry name" value="Ribosomal_S16"/>
    <property type="match status" value="1"/>
</dbReference>
<dbReference type="SUPFAM" id="SSF54565">
    <property type="entry name" value="Ribosomal protein S16"/>
    <property type="match status" value="1"/>
</dbReference>
<sequence>MVVIRMARGGAKKRSFYRIVVADKRSPRDGRFIEKLGFFNPLAKGGEERLKLDVAKAEAWLAKGAQPSDRVASLIKEAKKAA</sequence>
<organism>
    <name type="scientific">Francisella tularensis subsp. holarctica (strain FTNF002-00 / FTA)</name>
    <dbReference type="NCBI Taxonomy" id="458234"/>
    <lineage>
        <taxon>Bacteria</taxon>
        <taxon>Pseudomonadati</taxon>
        <taxon>Pseudomonadota</taxon>
        <taxon>Gammaproteobacteria</taxon>
        <taxon>Thiotrichales</taxon>
        <taxon>Francisellaceae</taxon>
        <taxon>Francisella</taxon>
    </lineage>
</organism>
<reference key="1">
    <citation type="journal article" date="2009" name="PLoS ONE">
        <title>Complete genome sequence of Francisella tularensis subspecies holarctica FTNF002-00.</title>
        <authorList>
            <person name="Barabote R.D."/>
            <person name="Xie G."/>
            <person name="Brettin T.S."/>
            <person name="Hinrichs S.H."/>
            <person name="Fey P.D."/>
            <person name="Jay J.J."/>
            <person name="Engle J.L."/>
            <person name="Godbole S.D."/>
            <person name="Noronha J.M."/>
            <person name="Scheuermann R.H."/>
            <person name="Zhou L.W."/>
            <person name="Lion C."/>
            <person name="Dempsey M.P."/>
        </authorList>
    </citation>
    <scope>NUCLEOTIDE SEQUENCE [LARGE SCALE GENOMIC DNA]</scope>
    <source>
        <strain>FTNF002-00 / FTA</strain>
    </source>
</reference>